<dbReference type="EMBL" id="CR380955">
    <property type="protein sequence ID" value="CAG60636.1"/>
    <property type="molecule type" value="Genomic_DNA"/>
</dbReference>
<dbReference type="RefSeq" id="XP_447691.1">
    <property type="nucleotide sequence ID" value="XM_447691.1"/>
</dbReference>
<dbReference type="SMR" id="Q6FQ03"/>
<dbReference type="FunCoup" id="Q6FQ03">
    <property type="interactions" value="109"/>
</dbReference>
<dbReference type="STRING" id="284593.Q6FQ03"/>
<dbReference type="GlyCosmos" id="Q6FQ03">
    <property type="glycosylation" value="1 site, No reported glycans"/>
</dbReference>
<dbReference type="EnsemblFungi" id="CAGL0I10384g-T">
    <property type="protein sequence ID" value="CAGL0I10384g-T-p1"/>
    <property type="gene ID" value="CAGL0I10384g"/>
</dbReference>
<dbReference type="GeneID" id="2889240"/>
<dbReference type="KEGG" id="cgr:2889240"/>
<dbReference type="CGD" id="CAL0130223">
    <property type="gene designation" value="TPO3"/>
</dbReference>
<dbReference type="VEuPathDB" id="FungiDB:CAGL0I10384g"/>
<dbReference type="eggNOG" id="KOG0255">
    <property type="taxonomic scope" value="Eukaryota"/>
</dbReference>
<dbReference type="HOGENOM" id="CLU_008455_11_5_1"/>
<dbReference type="InParanoid" id="Q6FQ03"/>
<dbReference type="OMA" id="TMIMTEP"/>
<dbReference type="Proteomes" id="UP000002428">
    <property type="component" value="Chromosome I"/>
</dbReference>
<dbReference type="GO" id="GO:0000329">
    <property type="term" value="C:fungal-type vacuole membrane"/>
    <property type="evidence" value="ECO:0007669"/>
    <property type="project" value="TreeGrafter"/>
</dbReference>
<dbReference type="GO" id="GO:0005886">
    <property type="term" value="C:plasma membrane"/>
    <property type="evidence" value="ECO:0000314"/>
    <property type="project" value="CGD"/>
</dbReference>
<dbReference type="GO" id="GO:0000297">
    <property type="term" value="F:spermine transmembrane transporter activity"/>
    <property type="evidence" value="ECO:0007669"/>
    <property type="project" value="TreeGrafter"/>
</dbReference>
<dbReference type="GO" id="GO:0000296">
    <property type="term" value="P:spermine transport"/>
    <property type="evidence" value="ECO:0000315"/>
    <property type="project" value="CGD"/>
</dbReference>
<dbReference type="CDD" id="cd17323">
    <property type="entry name" value="MFS_Tpo1_MDR_like"/>
    <property type="match status" value="1"/>
</dbReference>
<dbReference type="FunFam" id="1.20.1250.20:FF:000011">
    <property type="entry name" value="MFS multidrug transporter, putative"/>
    <property type="match status" value="1"/>
</dbReference>
<dbReference type="Gene3D" id="1.20.1250.20">
    <property type="entry name" value="MFS general substrate transporter like domains"/>
    <property type="match status" value="1"/>
</dbReference>
<dbReference type="InterPro" id="IPR011701">
    <property type="entry name" value="MFS"/>
</dbReference>
<dbReference type="InterPro" id="IPR020846">
    <property type="entry name" value="MFS_dom"/>
</dbReference>
<dbReference type="InterPro" id="IPR036259">
    <property type="entry name" value="MFS_trans_sf"/>
</dbReference>
<dbReference type="PANTHER" id="PTHR23502">
    <property type="entry name" value="MAJOR FACILITATOR SUPERFAMILY"/>
    <property type="match status" value="1"/>
</dbReference>
<dbReference type="PANTHER" id="PTHR23502:SF132">
    <property type="entry name" value="POLYAMINE TRANSPORTER 2-RELATED"/>
    <property type="match status" value="1"/>
</dbReference>
<dbReference type="Pfam" id="PF07690">
    <property type="entry name" value="MFS_1"/>
    <property type="match status" value="1"/>
</dbReference>
<dbReference type="SUPFAM" id="SSF103473">
    <property type="entry name" value="MFS general substrate transporter"/>
    <property type="match status" value="1"/>
</dbReference>
<dbReference type="PROSITE" id="PS50850">
    <property type="entry name" value="MFS"/>
    <property type="match status" value="1"/>
</dbReference>
<organism>
    <name type="scientific">Candida glabrata (strain ATCC 2001 / BCRC 20586 / JCM 3761 / NBRC 0622 / NRRL Y-65 / CBS 138)</name>
    <name type="common">Yeast</name>
    <name type="synonym">Nakaseomyces glabratus</name>
    <dbReference type="NCBI Taxonomy" id="284593"/>
    <lineage>
        <taxon>Eukaryota</taxon>
        <taxon>Fungi</taxon>
        <taxon>Dikarya</taxon>
        <taxon>Ascomycota</taxon>
        <taxon>Saccharomycotina</taxon>
        <taxon>Saccharomycetes</taxon>
        <taxon>Saccharomycetales</taxon>
        <taxon>Saccharomycetaceae</taxon>
        <taxon>Nakaseomyces</taxon>
    </lineage>
</organism>
<keyword id="KW-1003">Cell membrane</keyword>
<keyword id="KW-0325">Glycoprotein</keyword>
<keyword id="KW-0472">Membrane</keyword>
<keyword id="KW-1185">Reference proteome</keyword>
<keyword id="KW-0812">Transmembrane</keyword>
<keyword id="KW-1133">Transmembrane helix</keyword>
<keyword id="KW-0813">Transport</keyword>
<accession>Q6FQ03</accession>
<gene>
    <name evidence="6" type="primary">TPO3</name>
    <name type="ordered locus">CAGL0I10384g</name>
</gene>
<protein>
    <recommendedName>
        <fullName evidence="6">Multidrug transporter TPO3</fullName>
    </recommendedName>
    <alternativeName>
        <fullName evidence="7">Drug:H(+) antiporter TPO3</fullName>
        <shortName evidence="7">DHA TPO3</shortName>
    </alternativeName>
    <alternativeName>
        <fullName evidence="6">Polyamine transporter 3</fullName>
    </alternativeName>
</protein>
<evidence type="ECO:0000255" key="1"/>
<evidence type="ECO:0000255" key="2">
    <source>
        <dbReference type="PROSITE-ProRule" id="PRU00498"/>
    </source>
</evidence>
<evidence type="ECO:0000256" key="3">
    <source>
        <dbReference type="SAM" id="MobiDB-lite"/>
    </source>
</evidence>
<evidence type="ECO:0000269" key="4">
    <source>
    </source>
</evidence>
<evidence type="ECO:0000269" key="5">
    <source>
    </source>
</evidence>
<evidence type="ECO:0000303" key="6">
    <source>
    </source>
</evidence>
<evidence type="ECO:0000303" key="7">
    <source>
    </source>
</evidence>
<evidence type="ECO:0000305" key="8"/>
<reference key="1">
    <citation type="journal article" date="2004" name="Nature">
        <title>Genome evolution in yeasts.</title>
        <authorList>
            <person name="Dujon B."/>
            <person name="Sherman D."/>
            <person name="Fischer G."/>
            <person name="Durrens P."/>
            <person name="Casaregola S."/>
            <person name="Lafontaine I."/>
            <person name="de Montigny J."/>
            <person name="Marck C."/>
            <person name="Neuveglise C."/>
            <person name="Talla E."/>
            <person name="Goffard N."/>
            <person name="Frangeul L."/>
            <person name="Aigle M."/>
            <person name="Anthouard V."/>
            <person name="Babour A."/>
            <person name="Barbe V."/>
            <person name="Barnay S."/>
            <person name="Blanchin S."/>
            <person name="Beckerich J.-M."/>
            <person name="Beyne E."/>
            <person name="Bleykasten C."/>
            <person name="Boisrame A."/>
            <person name="Boyer J."/>
            <person name="Cattolico L."/>
            <person name="Confanioleri F."/>
            <person name="de Daruvar A."/>
            <person name="Despons L."/>
            <person name="Fabre E."/>
            <person name="Fairhead C."/>
            <person name="Ferry-Dumazet H."/>
            <person name="Groppi A."/>
            <person name="Hantraye F."/>
            <person name="Hennequin C."/>
            <person name="Jauniaux N."/>
            <person name="Joyet P."/>
            <person name="Kachouri R."/>
            <person name="Kerrest A."/>
            <person name="Koszul R."/>
            <person name="Lemaire M."/>
            <person name="Lesur I."/>
            <person name="Ma L."/>
            <person name="Muller H."/>
            <person name="Nicaud J.-M."/>
            <person name="Nikolski M."/>
            <person name="Oztas S."/>
            <person name="Ozier-Kalogeropoulos O."/>
            <person name="Pellenz S."/>
            <person name="Potier S."/>
            <person name="Richard G.-F."/>
            <person name="Straub M.-L."/>
            <person name="Suleau A."/>
            <person name="Swennen D."/>
            <person name="Tekaia F."/>
            <person name="Wesolowski-Louvel M."/>
            <person name="Westhof E."/>
            <person name="Wirth B."/>
            <person name="Zeniou-Meyer M."/>
            <person name="Zivanovic Y."/>
            <person name="Bolotin-Fukuhara M."/>
            <person name="Thierry A."/>
            <person name="Bouchier C."/>
            <person name="Caudron B."/>
            <person name="Scarpelli C."/>
            <person name="Gaillardin C."/>
            <person name="Weissenbach J."/>
            <person name="Wincker P."/>
            <person name="Souciet J.-L."/>
        </authorList>
    </citation>
    <scope>NUCLEOTIDE SEQUENCE [LARGE SCALE GENOMIC DNA]</scope>
    <source>
        <strain>ATCC 2001 / BCRC 20586 / JCM 3761 / NBRC 0622 / NRRL Y-65 / CBS 138</strain>
    </source>
</reference>
<reference key="2">
    <citation type="journal article" date="2014" name="J. Antimicrob. Chemother.">
        <title>Candida glabrata drug:H+ antiporter CgTpo3 (ORF CAGL0I10384g): role in azole drug resistance and polyamine homeostasis.</title>
        <authorList>
            <person name="Costa C."/>
            <person name="Nunes J."/>
            <person name="Henriques A."/>
            <person name="Mira N.P."/>
            <person name="Nakayama H."/>
            <person name="Chibana H."/>
            <person name="Teixeira M.C."/>
        </authorList>
    </citation>
    <scope>DISRUPTION PHENOTYPE</scope>
    <scope>SUBCELLULAR LOCATION</scope>
    <scope>FUNCTION</scope>
    <scope>INDUCTION</scope>
</reference>
<reference key="3">
    <citation type="journal article" date="2016" name="Front. Microbiol.">
        <title>Clotrimazole drug resistance in Candida glabrata clinical isolates correlates with increased expression of the drug:H(+) antiporters CgAqr1, CgTpo1_1, CgTpo3, and CgQdr2.</title>
        <authorList>
            <person name="Costa C."/>
            <person name="Ribeiro J."/>
            <person name="Miranda I.M."/>
            <person name="Silva-Dias A."/>
            <person name="Cavalheiro M."/>
            <person name="Costa-de-Oliveira S."/>
            <person name="Rodrigues A.G."/>
            <person name="Teixeira M.C."/>
        </authorList>
    </citation>
    <scope>FUNCTION</scope>
    <scope>DISRUPTION PHENOTYPE</scope>
</reference>
<sequence length="630" mass="70068">MVDQESLVSFSSETSQSINSDIDIESQQQPRQYIPSNEKDGNKERLHLTRTETVKSLQEMGMTQDAPIPDVNAPQTTTKNAIFPEEYTMETPTGLVPVATLQSLGRTSTAISKSRTRQIERSVSRRSQNIAASSNSSNKEELEDEEEVSSDMSNQQPELDPEIEFVTFVTGDPTNPHNWPLWIRWAYTVILSCLVICVAYGSACITGGLFTVQEQYHVGLEAAILSCSLMVIGFSLGPLIWSPVSDLYGRRLAYFISMGLYTIFNIPCALSPNLGGLLVCRFLCGVFSSSGLCLVGGSIADMFPSETRGRAIAFFAFAPYTGPIIGPLVNGFVSVCTRRMDLIFWINMAFAGVMWIIVAFIPETYAPVILKWRAAKLRKETGNPKIMTEQEAQGVSVNEMMKACLIRPLYFAVTEPVLDLTCFYVCLIYSLLYAFFFAFPVVFGELYGYKDNLIGLMFIPILIGATMALATTFYCENEYLKLVKKRKPTPEDRLFGAMIGAPFAAAALWILGATSYKHIIWVGPASSGLAFGYGMVLIYYSLNNYIIDCYVQYASSALATKVFLRSAGGAAFPLFTNQMYHKLGLQWASWLLAFISTAMILLPFGFYYYGKTLRHKLSKKDYSIDTIEGY</sequence>
<proteinExistence type="evidence at transcript level"/>
<name>TPO3_CANGA</name>
<feature type="chain" id="PRO_0000443416" description="Multidrug transporter TPO3">
    <location>
        <begin position="1"/>
        <end position="630"/>
    </location>
</feature>
<feature type="transmembrane region" description="Helical" evidence="1">
    <location>
        <begin position="190"/>
        <end position="210"/>
    </location>
</feature>
<feature type="transmembrane region" description="Helical" evidence="1">
    <location>
        <begin position="222"/>
        <end position="242"/>
    </location>
</feature>
<feature type="transmembrane region" description="Helical" evidence="1">
    <location>
        <begin position="252"/>
        <end position="272"/>
    </location>
</feature>
<feature type="transmembrane region" description="Helical" evidence="1">
    <location>
        <begin position="282"/>
        <end position="302"/>
    </location>
</feature>
<feature type="transmembrane region" description="Helical" evidence="1">
    <location>
        <begin position="312"/>
        <end position="332"/>
    </location>
</feature>
<feature type="transmembrane region" description="Helical" evidence="1">
    <location>
        <begin position="342"/>
        <end position="362"/>
    </location>
</feature>
<feature type="transmembrane region" description="Helical" evidence="1">
    <location>
        <begin position="423"/>
        <end position="443"/>
    </location>
</feature>
<feature type="transmembrane region" description="Helical" evidence="1">
    <location>
        <begin position="453"/>
        <end position="473"/>
    </location>
</feature>
<feature type="transmembrane region" description="Helical" evidence="1">
    <location>
        <begin position="494"/>
        <end position="514"/>
    </location>
</feature>
<feature type="transmembrane region" description="Helical" evidence="1">
    <location>
        <begin position="519"/>
        <end position="539"/>
    </location>
</feature>
<feature type="transmembrane region" description="Helical" evidence="1">
    <location>
        <begin position="553"/>
        <end position="575"/>
    </location>
</feature>
<feature type="transmembrane region" description="Helical" evidence="1">
    <location>
        <begin position="587"/>
        <end position="607"/>
    </location>
</feature>
<feature type="region of interest" description="Disordered" evidence="3">
    <location>
        <begin position="1"/>
        <end position="46"/>
    </location>
</feature>
<feature type="region of interest" description="Disordered" evidence="3">
    <location>
        <begin position="107"/>
        <end position="157"/>
    </location>
</feature>
<feature type="compositionally biased region" description="Polar residues" evidence="3">
    <location>
        <begin position="1"/>
        <end position="35"/>
    </location>
</feature>
<feature type="compositionally biased region" description="Basic and acidic residues" evidence="3">
    <location>
        <begin position="37"/>
        <end position="46"/>
    </location>
</feature>
<feature type="compositionally biased region" description="Low complexity" evidence="3">
    <location>
        <begin position="125"/>
        <end position="137"/>
    </location>
</feature>
<feature type="glycosylation site" description="N-linked (GlcNAc...) asparagine" evidence="2">
    <location>
        <position position="135"/>
    </location>
</feature>
<comment type="function">
    <text evidence="4 5">Cell membrane polyamine/proton antiporter, involved in the detoxification of excess polyamines in the cytoplasm (PubMed:24576949, PubMed:27148215). Involved in the resistance to the imidazole antifungal drugs tioconazole, miconazole, clotrimazole and ketoconazole; to the triazole fluconazole; but not to the antifungals flucytosine or amphotericin B (PubMed:24576949). Plays a role in spermine homeostasis, but spermine accumulation in response to clotrimazole is independent of TPO3 (PubMed:24576949, PubMed:27148215).</text>
</comment>
<comment type="subcellular location">
    <subcellularLocation>
        <location evidence="4">Cell membrane</location>
        <topology evidence="1">Multi-pass membrane protein</topology>
    </subcellularLocation>
</comment>
<comment type="induction">
    <text evidence="4">Expression is up-regulated under spermine stress and depends on the pleiotropic drug resistance transcription factor PDR1 (PubMed:24576949).</text>
</comment>
<comment type="disruption phenotype">
    <text evidence="4 5">Increases the susceptibility to the imidazole antifungal drugs tioconazole, miconazole, clotrimazole and ketoconazole; to the triazole fluconazole; but not to the antifungals flucytosine or amphotericin B (PubMed:24576949, PubMed:27148215).</text>
</comment>
<comment type="similarity">
    <text evidence="8">Belongs to the major facilitator superfamily. DHA1 family. Polyamines/proton antiporter (TC 2.A.1.2.16) subfamily.</text>
</comment>